<reference key="1">
    <citation type="journal article" date="2001" name="Nature">
        <title>Genome sequence of Yersinia pestis, the causative agent of plague.</title>
        <authorList>
            <person name="Parkhill J."/>
            <person name="Wren B.W."/>
            <person name="Thomson N.R."/>
            <person name="Titball R.W."/>
            <person name="Holden M.T.G."/>
            <person name="Prentice M.B."/>
            <person name="Sebaihia M."/>
            <person name="James K.D."/>
            <person name="Churcher C.M."/>
            <person name="Mungall K.L."/>
            <person name="Baker S."/>
            <person name="Basham D."/>
            <person name="Bentley S.D."/>
            <person name="Brooks K."/>
            <person name="Cerdeno-Tarraga A.-M."/>
            <person name="Chillingworth T."/>
            <person name="Cronin A."/>
            <person name="Davies R.M."/>
            <person name="Davis P."/>
            <person name="Dougan G."/>
            <person name="Feltwell T."/>
            <person name="Hamlin N."/>
            <person name="Holroyd S."/>
            <person name="Jagels K."/>
            <person name="Karlyshev A.V."/>
            <person name="Leather S."/>
            <person name="Moule S."/>
            <person name="Oyston P.C.F."/>
            <person name="Quail M.A."/>
            <person name="Rutherford K.M."/>
            <person name="Simmonds M."/>
            <person name="Skelton J."/>
            <person name="Stevens K."/>
            <person name="Whitehead S."/>
            <person name="Barrell B.G."/>
        </authorList>
    </citation>
    <scope>NUCLEOTIDE SEQUENCE [LARGE SCALE GENOMIC DNA]</scope>
    <source>
        <strain>CO-92 / Biovar Orientalis</strain>
    </source>
</reference>
<reference key="2">
    <citation type="journal article" date="2002" name="J. Bacteriol.">
        <title>Genome sequence of Yersinia pestis KIM.</title>
        <authorList>
            <person name="Deng W."/>
            <person name="Burland V."/>
            <person name="Plunkett G. III"/>
            <person name="Boutin A."/>
            <person name="Mayhew G.F."/>
            <person name="Liss P."/>
            <person name="Perna N.T."/>
            <person name="Rose D.J."/>
            <person name="Mau B."/>
            <person name="Zhou S."/>
            <person name="Schwartz D.C."/>
            <person name="Fetherston J.D."/>
            <person name="Lindler L.E."/>
            <person name="Brubaker R.R."/>
            <person name="Plano G.V."/>
            <person name="Straley S.C."/>
            <person name="McDonough K.A."/>
            <person name="Nilles M.L."/>
            <person name="Matson J.S."/>
            <person name="Blattner F.R."/>
            <person name="Perry R.D."/>
        </authorList>
    </citation>
    <scope>NUCLEOTIDE SEQUENCE [LARGE SCALE GENOMIC DNA]</scope>
    <source>
        <strain>KIM10+ / Biovar Mediaevalis</strain>
    </source>
</reference>
<reference key="3">
    <citation type="journal article" date="2004" name="DNA Res.">
        <title>Complete genome sequence of Yersinia pestis strain 91001, an isolate avirulent to humans.</title>
        <authorList>
            <person name="Song Y."/>
            <person name="Tong Z."/>
            <person name="Wang J."/>
            <person name="Wang L."/>
            <person name="Guo Z."/>
            <person name="Han Y."/>
            <person name="Zhang J."/>
            <person name="Pei D."/>
            <person name="Zhou D."/>
            <person name="Qin H."/>
            <person name="Pang X."/>
            <person name="Han Y."/>
            <person name="Zhai J."/>
            <person name="Li M."/>
            <person name="Cui B."/>
            <person name="Qi Z."/>
            <person name="Jin L."/>
            <person name="Dai R."/>
            <person name="Chen F."/>
            <person name="Li S."/>
            <person name="Ye C."/>
            <person name="Du Z."/>
            <person name="Lin W."/>
            <person name="Wang J."/>
            <person name="Yu J."/>
            <person name="Yang H."/>
            <person name="Wang J."/>
            <person name="Huang P."/>
            <person name="Yang R."/>
        </authorList>
    </citation>
    <scope>NUCLEOTIDE SEQUENCE [LARGE SCALE GENOMIC DNA]</scope>
    <source>
        <strain>91001 / Biovar Mediaevalis</strain>
    </source>
</reference>
<dbReference type="EC" id="2.2.1.2" evidence="2"/>
<dbReference type="EMBL" id="AL590842">
    <property type="protein sequence ID" value="CAL19142.1"/>
    <property type="molecule type" value="Genomic_DNA"/>
</dbReference>
<dbReference type="EMBL" id="AE009952">
    <property type="protein sequence ID" value="AAM87260.1"/>
    <property type="status" value="ALT_INIT"/>
    <property type="molecule type" value="Genomic_DNA"/>
</dbReference>
<dbReference type="EMBL" id="AE017042">
    <property type="protein sequence ID" value="AAS63866.1"/>
    <property type="status" value="ALT_INIT"/>
    <property type="molecule type" value="Genomic_DNA"/>
</dbReference>
<dbReference type="PIR" id="AD0057">
    <property type="entry name" value="AD0057"/>
</dbReference>
<dbReference type="RefSeq" id="WP_002209241.1">
    <property type="nucleotide sequence ID" value="NZ_WUCM01000002.1"/>
</dbReference>
<dbReference type="RefSeq" id="YP_002345535.1">
    <property type="nucleotide sequence ID" value="NC_003143.1"/>
</dbReference>
<dbReference type="SMR" id="Q8ZIN2"/>
<dbReference type="IntAct" id="Q8ZIN2">
    <property type="interactions" value="1"/>
</dbReference>
<dbReference type="STRING" id="214092.YPO0463"/>
<dbReference type="PaxDb" id="214092-YPO0463"/>
<dbReference type="EnsemblBacteria" id="AAS63866">
    <property type="protein sequence ID" value="AAS63866"/>
    <property type="gene ID" value="YP_3718"/>
</dbReference>
<dbReference type="GeneID" id="57974146"/>
<dbReference type="KEGG" id="ype:YPO0463"/>
<dbReference type="KEGG" id="ypk:y3712"/>
<dbReference type="KEGG" id="ypm:YP_3718"/>
<dbReference type="PATRIC" id="fig|214092.21.peg.709"/>
<dbReference type="eggNOG" id="COG0176">
    <property type="taxonomic scope" value="Bacteria"/>
</dbReference>
<dbReference type="HOGENOM" id="CLU_047470_0_1_6"/>
<dbReference type="OrthoDB" id="9809101at2"/>
<dbReference type="UniPathway" id="UPA00115">
    <property type="reaction ID" value="UER00414"/>
</dbReference>
<dbReference type="Proteomes" id="UP000000815">
    <property type="component" value="Chromosome"/>
</dbReference>
<dbReference type="Proteomes" id="UP000001019">
    <property type="component" value="Chromosome"/>
</dbReference>
<dbReference type="Proteomes" id="UP000002490">
    <property type="component" value="Chromosome"/>
</dbReference>
<dbReference type="GO" id="GO:0005829">
    <property type="term" value="C:cytosol"/>
    <property type="evidence" value="ECO:0000318"/>
    <property type="project" value="GO_Central"/>
</dbReference>
<dbReference type="GO" id="GO:0004801">
    <property type="term" value="F:transaldolase activity"/>
    <property type="evidence" value="ECO:0000250"/>
    <property type="project" value="UniProtKB"/>
</dbReference>
<dbReference type="GO" id="GO:0005975">
    <property type="term" value="P:carbohydrate metabolic process"/>
    <property type="evidence" value="ECO:0007669"/>
    <property type="project" value="InterPro"/>
</dbReference>
<dbReference type="GO" id="GO:0009052">
    <property type="term" value="P:pentose-phosphate shunt, non-oxidative branch"/>
    <property type="evidence" value="ECO:0000318"/>
    <property type="project" value="GO_Central"/>
</dbReference>
<dbReference type="CDD" id="cd00957">
    <property type="entry name" value="Transaldolase_TalAB"/>
    <property type="match status" value="1"/>
</dbReference>
<dbReference type="FunFam" id="3.20.20.70:FF:000002">
    <property type="entry name" value="Transaldolase"/>
    <property type="match status" value="1"/>
</dbReference>
<dbReference type="Gene3D" id="3.20.20.70">
    <property type="entry name" value="Aldolase class I"/>
    <property type="match status" value="1"/>
</dbReference>
<dbReference type="HAMAP" id="MF_00492">
    <property type="entry name" value="Transaldolase_1"/>
    <property type="match status" value="1"/>
</dbReference>
<dbReference type="InterPro" id="IPR013785">
    <property type="entry name" value="Aldolase_TIM"/>
</dbReference>
<dbReference type="InterPro" id="IPR001585">
    <property type="entry name" value="TAL/FSA"/>
</dbReference>
<dbReference type="InterPro" id="IPR004730">
    <property type="entry name" value="Transaldolase_1"/>
</dbReference>
<dbReference type="InterPro" id="IPR018225">
    <property type="entry name" value="Transaldolase_AS"/>
</dbReference>
<dbReference type="NCBIfam" id="NF009001">
    <property type="entry name" value="PRK12346.1"/>
    <property type="match status" value="1"/>
</dbReference>
<dbReference type="NCBIfam" id="TIGR00874">
    <property type="entry name" value="talAB"/>
    <property type="match status" value="1"/>
</dbReference>
<dbReference type="PANTHER" id="PTHR10683">
    <property type="entry name" value="TRANSALDOLASE"/>
    <property type="match status" value="1"/>
</dbReference>
<dbReference type="PANTHER" id="PTHR10683:SF18">
    <property type="entry name" value="TRANSALDOLASE"/>
    <property type="match status" value="1"/>
</dbReference>
<dbReference type="Pfam" id="PF00923">
    <property type="entry name" value="TAL_FSA"/>
    <property type="match status" value="1"/>
</dbReference>
<dbReference type="SUPFAM" id="SSF51569">
    <property type="entry name" value="Aldolase"/>
    <property type="match status" value="1"/>
</dbReference>
<dbReference type="PROSITE" id="PS01054">
    <property type="entry name" value="TRANSALDOLASE_1"/>
    <property type="match status" value="1"/>
</dbReference>
<dbReference type="PROSITE" id="PS00958">
    <property type="entry name" value="TRANSALDOLASE_2"/>
    <property type="match status" value="1"/>
</dbReference>
<keyword id="KW-0963">Cytoplasm</keyword>
<keyword id="KW-0570">Pentose shunt</keyword>
<keyword id="KW-1185">Reference proteome</keyword>
<keyword id="KW-0704">Schiff base</keyword>
<keyword id="KW-0808">Transferase</keyword>
<proteinExistence type="inferred from homology"/>
<gene>
    <name evidence="2" type="primary">tal</name>
    <name type="synonym">talB</name>
    <name type="ordered locus">YPO0463</name>
    <name type="ordered locus">y3712</name>
    <name type="ordered locus">YP_3718</name>
</gene>
<sequence>MTDKLTSLRQITTVVADTGDIAAMKLYQPQDATTNPSIILNAAQIPEYRKLIDEAIAWAREQSSDHAQQIVDATDKLAVNIGLEILKLIPGRISTEVDARLSYDTVASVAKAKRLIKLYNEAGISNDRILIKLASTWQGIRAAEQLEKEGINCNLTLLFSFAQARACAEAGVFLISPFVGRILDWYKANGDQKEFAPSEDPGVVSVTEIYQYYKKHGYKTVVMGASFRNLGEIIELAGCDRLTIAPSLLKELAESEGPVERKLAYTGEIQAKPAPLTEAEFYWQHNQDPMAVDKLADGIRKFAIDQGKLEKMISDLL</sequence>
<name>TAL_YERPE</name>
<organism>
    <name type="scientific">Yersinia pestis</name>
    <dbReference type="NCBI Taxonomy" id="632"/>
    <lineage>
        <taxon>Bacteria</taxon>
        <taxon>Pseudomonadati</taxon>
        <taxon>Pseudomonadota</taxon>
        <taxon>Gammaproteobacteria</taxon>
        <taxon>Enterobacterales</taxon>
        <taxon>Yersiniaceae</taxon>
        <taxon>Yersinia</taxon>
    </lineage>
</organism>
<protein>
    <recommendedName>
        <fullName evidence="2">Transaldolase</fullName>
        <ecNumber evidence="2">2.2.1.2</ecNumber>
    </recommendedName>
</protein>
<comment type="function">
    <text evidence="2">Transaldolase is important for the balance of metabolites in the pentose-phosphate pathway.</text>
</comment>
<comment type="catalytic activity">
    <reaction evidence="2">
        <text>D-sedoheptulose 7-phosphate + D-glyceraldehyde 3-phosphate = D-erythrose 4-phosphate + beta-D-fructose 6-phosphate</text>
        <dbReference type="Rhea" id="RHEA:17053"/>
        <dbReference type="ChEBI" id="CHEBI:16897"/>
        <dbReference type="ChEBI" id="CHEBI:57483"/>
        <dbReference type="ChEBI" id="CHEBI:57634"/>
        <dbReference type="ChEBI" id="CHEBI:59776"/>
        <dbReference type="EC" id="2.2.1.2"/>
    </reaction>
</comment>
<comment type="pathway">
    <text evidence="2">Carbohydrate degradation; pentose phosphate pathway; D-glyceraldehyde 3-phosphate and beta-D-fructose 6-phosphate from D-ribose 5-phosphate and D-xylulose 5-phosphate (non-oxidative stage): step 2/3.</text>
</comment>
<comment type="subunit">
    <text evidence="1">Homodimer.</text>
</comment>
<comment type="subcellular location">
    <subcellularLocation>
        <location evidence="2">Cytoplasm</location>
    </subcellularLocation>
</comment>
<comment type="similarity">
    <text evidence="2">Belongs to the transaldolase family. Type 1 subfamily.</text>
</comment>
<comment type="sequence caution" evidence="3">
    <conflict type="erroneous initiation">
        <sequence resource="EMBL-CDS" id="AAM87260"/>
    </conflict>
    <text>Extended N-terminus.</text>
</comment>
<comment type="sequence caution" evidence="3">
    <conflict type="erroneous initiation">
        <sequence resource="EMBL-CDS" id="AAS63866"/>
    </conflict>
    <text>Extended N-terminus.</text>
</comment>
<feature type="chain" id="PRO_0000173627" description="Transaldolase">
    <location>
        <begin position="1"/>
        <end position="317"/>
    </location>
</feature>
<feature type="active site" description="Schiff-base intermediate with substrate" evidence="2">
    <location>
        <position position="132"/>
    </location>
</feature>
<evidence type="ECO:0000250" key="1"/>
<evidence type="ECO:0000255" key="2">
    <source>
        <dbReference type="HAMAP-Rule" id="MF_00492"/>
    </source>
</evidence>
<evidence type="ECO:0000305" key="3"/>
<accession>Q8ZIN2</accession>
<accession>Q0WJK3</accession>